<organism>
    <name type="scientific">Bacillus cereus (strain AH187)</name>
    <dbReference type="NCBI Taxonomy" id="405534"/>
    <lineage>
        <taxon>Bacteria</taxon>
        <taxon>Bacillati</taxon>
        <taxon>Bacillota</taxon>
        <taxon>Bacilli</taxon>
        <taxon>Bacillales</taxon>
        <taxon>Bacillaceae</taxon>
        <taxon>Bacillus</taxon>
        <taxon>Bacillus cereus group</taxon>
    </lineage>
</organism>
<accession>B7I0E9</accession>
<proteinExistence type="inferred from homology"/>
<comment type="function">
    <text evidence="1">Catalyzes the transfer of the phosphoribosyl group of 5-phosphorylribose-1-pyrophosphate (PRPP) to anthranilate to yield N-(5'-phosphoribosyl)-anthranilate (PRA).</text>
</comment>
<comment type="catalytic activity">
    <reaction evidence="1">
        <text>N-(5-phospho-beta-D-ribosyl)anthranilate + diphosphate = 5-phospho-alpha-D-ribose 1-diphosphate + anthranilate</text>
        <dbReference type="Rhea" id="RHEA:11768"/>
        <dbReference type="ChEBI" id="CHEBI:16567"/>
        <dbReference type="ChEBI" id="CHEBI:18277"/>
        <dbReference type="ChEBI" id="CHEBI:33019"/>
        <dbReference type="ChEBI" id="CHEBI:58017"/>
        <dbReference type="EC" id="2.4.2.18"/>
    </reaction>
</comment>
<comment type="cofactor">
    <cofactor evidence="1">
        <name>Mg(2+)</name>
        <dbReference type="ChEBI" id="CHEBI:18420"/>
    </cofactor>
    <text evidence="1">Binds 2 magnesium ions per monomer.</text>
</comment>
<comment type="pathway">
    <text evidence="1">Amino-acid biosynthesis; L-tryptophan biosynthesis; L-tryptophan from chorismate: step 2/5.</text>
</comment>
<comment type="subunit">
    <text evidence="1">Homodimer.</text>
</comment>
<comment type="similarity">
    <text evidence="1">Belongs to the anthranilate phosphoribosyltransferase family.</text>
</comment>
<dbReference type="EC" id="2.4.2.18" evidence="1"/>
<dbReference type="EMBL" id="CP001177">
    <property type="protein sequence ID" value="ACJ80756.1"/>
    <property type="molecule type" value="Genomic_DNA"/>
</dbReference>
<dbReference type="SMR" id="B7I0E9"/>
<dbReference type="KEGG" id="bcr:BCAH187_A1395"/>
<dbReference type="HOGENOM" id="CLU_034315_2_1_9"/>
<dbReference type="UniPathway" id="UPA00035">
    <property type="reaction ID" value="UER00041"/>
</dbReference>
<dbReference type="Proteomes" id="UP000002214">
    <property type="component" value="Chromosome"/>
</dbReference>
<dbReference type="GO" id="GO:0005829">
    <property type="term" value="C:cytosol"/>
    <property type="evidence" value="ECO:0007669"/>
    <property type="project" value="TreeGrafter"/>
</dbReference>
<dbReference type="GO" id="GO:0004048">
    <property type="term" value="F:anthranilate phosphoribosyltransferase activity"/>
    <property type="evidence" value="ECO:0007669"/>
    <property type="project" value="UniProtKB-UniRule"/>
</dbReference>
<dbReference type="GO" id="GO:0000287">
    <property type="term" value="F:magnesium ion binding"/>
    <property type="evidence" value="ECO:0007669"/>
    <property type="project" value="UniProtKB-UniRule"/>
</dbReference>
<dbReference type="GO" id="GO:0000162">
    <property type="term" value="P:L-tryptophan biosynthetic process"/>
    <property type="evidence" value="ECO:0007669"/>
    <property type="project" value="UniProtKB-UniRule"/>
</dbReference>
<dbReference type="FunFam" id="3.40.1030.10:FF:000002">
    <property type="entry name" value="Anthranilate phosphoribosyltransferase"/>
    <property type="match status" value="1"/>
</dbReference>
<dbReference type="Gene3D" id="3.40.1030.10">
    <property type="entry name" value="Nucleoside phosphorylase/phosphoribosyltransferase catalytic domain"/>
    <property type="match status" value="1"/>
</dbReference>
<dbReference type="Gene3D" id="1.20.970.10">
    <property type="entry name" value="Transferase, Pyrimidine Nucleoside Phosphorylase, Chain C"/>
    <property type="match status" value="1"/>
</dbReference>
<dbReference type="HAMAP" id="MF_00211">
    <property type="entry name" value="TrpD"/>
    <property type="match status" value="1"/>
</dbReference>
<dbReference type="InterPro" id="IPR005940">
    <property type="entry name" value="Anthranilate_Pribosyl_Tfrase"/>
</dbReference>
<dbReference type="InterPro" id="IPR000312">
    <property type="entry name" value="Glycosyl_Trfase_fam3"/>
</dbReference>
<dbReference type="InterPro" id="IPR017459">
    <property type="entry name" value="Glycosyl_Trfase_fam3_N_dom"/>
</dbReference>
<dbReference type="InterPro" id="IPR036320">
    <property type="entry name" value="Glycosyl_Trfase_fam3_N_dom_sf"/>
</dbReference>
<dbReference type="InterPro" id="IPR035902">
    <property type="entry name" value="Nuc_phospho_transferase"/>
</dbReference>
<dbReference type="NCBIfam" id="TIGR01245">
    <property type="entry name" value="trpD"/>
    <property type="match status" value="1"/>
</dbReference>
<dbReference type="PANTHER" id="PTHR43285">
    <property type="entry name" value="ANTHRANILATE PHOSPHORIBOSYLTRANSFERASE"/>
    <property type="match status" value="1"/>
</dbReference>
<dbReference type="PANTHER" id="PTHR43285:SF2">
    <property type="entry name" value="ANTHRANILATE PHOSPHORIBOSYLTRANSFERASE"/>
    <property type="match status" value="1"/>
</dbReference>
<dbReference type="Pfam" id="PF02885">
    <property type="entry name" value="Glycos_trans_3N"/>
    <property type="match status" value="1"/>
</dbReference>
<dbReference type="Pfam" id="PF00591">
    <property type="entry name" value="Glycos_transf_3"/>
    <property type="match status" value="1"/>
</dbReference>
<dbReference type="SUPFAM" id="SSF52418">
    <property type="entry name" value="Nucleoside phosphorylase/phosphoribosyltransferase catalytic domain"/>
    <property type="match status" value="1"/>
</dbReference>
<dbReference type="SUPFAM" id="SSF47648">
    <property type="entry name" value="Nucleoside phosphorylase/phosphoribosyltransferase N-terminal domain"/>
    <property type="match status" value="1"/>
</dbReference>
<name>TRPD_BACC7</name>
<gene>
    <name evidence="1" type="primary">trpD</name>
    <name type="ordered locus">BCAH187_A1395</name>
</gene>
<keyword id="KW-0028">Amino-acid biosynthesis</keyword>
<keyword id="KW-0057">Aromatic amino acid biosynthesis</keyword>
<keyword id="KW-0328">Glycosyltransferase</keyword>
<keyword id="KW-0460">Magnesium</keyword>
<keyword id="KW-0479">Metal-binding</keyword>
<keyword id="KW-0808">Transferase</keyword>
<keyword id="KW-0822">Tryptophan biosynthesis</keyword>
<reference key="1">
    <citation type="submission" date="2008-10" db="EMBL/GenBank/DDBJ databases">
        <title>Genome sequence of Bacillus cereus AH187.</title>
        <authorList>
            <person name="Dodson R.J."/>
            <person name="Durkin A.S."/>
            <person name="Rosovitz M.J."/>
            <person name="Rasko D.A."/>
            <person name="Kolsto A.B."/>
            <person name="Okstad O.A."/>
            <person name="Ravel J."/>
            <person name="Sutton G."/>
        </authorList>
    </citation>
    <scope>NUCLEOTIDE SEQUENCE [LARGE SCALE GENOMIC DNA]</scope>
    <source>
        <strain>AH187</strain>
    </source>
</reference>
<protein>
    <recommendedName>
        <fullName evidence="1">Anthranilate phosphoribosyltransferase</fullName>
        <ecNumber evidence="1">2.4.2.18</ecNumber>
    </recommendedName>
</protein>
<feature type="chain" id="PRO_1000198802" description="Anthranilate phosphoribosyltransferase">
    <location>
        <begin position="1"/>
        <end position="341"/>
    </location>
</feature>
<feature type="binding site" evidence="1">
    <location>
        <position position="79"/>
    </location>
    <ligand>
        <name>5-phospho-alpha-D-ribose 1-diphosphate</name>
        <dbReference type="ChEBI" id="CHEBI:58017"/>
    </ligand>
</feature>
<feature type="binding site" evidence="1">
    <location>
        <position position="79"/>
    </location>
    <ligand>
        <name>anthranilate</name>
        <dbReference type="ChEBI" id="CHEBI:16567"/>
        <label>1</label>
    </ligand>
</feature>
<feature type="binding site" evidence="1">
    <location>
        <begin position="82"/>
        <end position="83"/>
    </location>
    <ligand>
        <name>5-phospho-alpha-D-ribose 1-diphosphate</name>
        <dbReference type="ChEBI" id="CHEBI:58017"/>
    </ligand>
</feature>
<feature type="binding site" evidence="1">
    <location>
        <position position="87"/>
    </location>
    <ligand>
        <name>5-phospho-alpha-D-ribose 1-diphosphate</name>
        <dbReference type="ChEBI" id="CHEBI:58017"/>
    </ligand>
</feature>
<feature type="binding site" evidence="1">
    <location>
        <begin position="89"/>
        <end position="92"/>
    </location>
    <ligand>
        <name>5-phospho-alpha-D-ribose 1-diphosphate</name>
        <dbReference type="ChEBI" id="CHEBI:58017"/>
    </ligand>
</feature>
<feature type="binding site" evidence="1">
    <location>
        <position position="91"/>
    </location>
    <ligand>
        <name>Mg(2+)</name>
        <dbReference type="ChEBI" id="CHEBI:18420"/>
        <label>1</label>
    </ligand>
</feature>
<feature type="binding site" evidence="1">
    <location>
        <begin position="107"/>
        <end position="115"/>
    </location>
    <ligand>
        <name>5-phospho-alpha-D-ribose 1-diphosphate</name>
        <dbReference type="ChEBI" id="CHEBI:58017"/>
    </ligand>
</feature>
<feature type="binding site" evidence="1">
    <location>
        <position position="110"/>
    </location>
    <ligand>
        <name>anthranilate</name>
        <dbReference type="ChEBI" id="CHEBI:16567"/>
        <label>1</label>
    </ligand>
</feature>
<feature type="binding site" evidence="1">
    <location>
        <position position="119"/>
    </location>
    <ligand>
        <name>5-phospho-alpha-D-ribose 1-diphosphate</name>
        <dbReference type="ChEBI" id="CHEBI:58017"/>
    </ligand>
</feature>
<feature type="binding site" evidence="1">
    <location>
        <position position="165"/>
    </location>
    <ligand>
        <name>anthranilate</name>
        <dbReference type="ChEBI" id="CHEBI:16567"/>
        <label>2</label>
    </ligand>
</feature>
<feature type="binding site" evidence="1">
    <location>
        <position position="224"/>
    </location>
    <ligand>
        <name>Mg(2+)</name>
        <dbReference type="ChEBI" id="CHEBI:18420"/>
        <label>2</label>
    </ligand>
</feature>
<feature type="binding site" evidence="1">
    <location>
        <position position="225"/>
    </location>
    <ligand>
        <name>Mg(2+)</name>
        <dbReference type="ChEBI" id="CHEBI:18420"/>
        <label>1</label>
    </ligand>
</feature>
<feature type="binding site" evidence="1">
    <location>
        <position position="225"/>
    </location>
    <ligand>
        <name>Mg(2+)</name>
        <dbReference type="ChEBI" id="CHEBI:18420"/>
        <label>2</label>
    </ligand>
</feature>
<sequence>MNNYLRKLVEGQHLTEEEMYKAGLLLLNENILESEIAAFLVLLKAKGETAEEIYGLVRALREKALPFSNHIQGAMDNCGTGGDGAQTFNISTTSAFVLAGADVKVAKHGNRAVSSKTGSADLLEELGVNISSTPNEIDYLLEHVGIAFLFAPAMHPALKRIMKIRKELNVPTIFNLIGPLTNPVNLETQFVGIYKRDMLLPVAQVLQKLGRKQALVVNGSGFLDEASLQGENHVVILKDNEIVETSIEPEKYGFSIVKNEEIRGGNSKENAKITLGVLSGEKSVYRDTVLFNAGLALFANGKAKTIEEGITLAAHSIDSGKALAKLNLLIAASNEKLERVN</sequence>
<evidence type="ECO:0000255" key="1">
    <source>
        <dbReference type="HAMAP-Rule" id="MF_00211"/>
    </source>
</evidence>